<reference key="1">
    <citation type="journal article" date="1996" name="EMBO J.">
        <title>Complete nucleotide sequence of Saccharomyces cerevisiae chromosome X.</title>
        <authorList>
            <person name="Galibert F."/>
            <person name="Alexandraki D."/>
            <person name="Baur A."/>
            <person name="Boles E."/>
            <person name="Chalwatzis N."/>
            <person name="Chuat J.-C."/>
            <person name="Coster F."/>
            <person name="Cziepluch C."/>
            <person name="de Haan M."/>
            <person name="Domdey H."/>
            <person name="Durand P."/>
            <person name="Entian K.-D."/>
            <person name="Gatius M."/>
            <person name="Goffeau A."/>
            <person name="Grivell L.A."/>
            <person name="Hennemann A."/>
            <person name="Herbert C.J."/>
            <person name="Heumann K."/>
            <person name="Hilger F."/>
            <person name="Hollenberg C.P."/>
            <person name="Huang M.-E."/>
            <person name="Jacq C."/>
            <person name="Jauniaux J.-C."/>
            <person name="Katsoulou C."/>
            <person name="Kirchrath L."/>
            <person name="Kleine K."/>
            <person name="Kordes E."/>
            <person name="Koetter P."/>
            <person name="Liebl S."/>
            <person name="Louis E.J."/>
            <person name="Manus V."/>
            <person name="Mewes H.-W."/>
            <person name="Miosga T."/>
            <person name="Obermaier B."/>
            <person name="Perea J."/>
            <person name="Pohl T.M."/>
            <person name="Portetelle D."/>
            <person name="Pujol A."/>
            <person name="Purnelle B."/>
            <person name="Ramezani Rad M."/>
            <person name="Rasmussen S.W."/>
            <person name="Rose M."/>
            <person name="Rossau R."/>
            <person name="Schaaff-Gerstenschlaeger I."/>
            <person name="Smits P.H.M."/>
            <person name="Scarcez T."/>
            <person name="Soriano N."/>
            <person name="To Van D."/>
            <person name="Tzermia M."/>
            <person name="Van Broekhoven A."/>
            <person name="Vandenbol M."/>
            <person name="Wedler H."/>
            <person name="von Wettstein D."/>
            <person name="Wambutt R."/>
            <person name="Zagulski M."/>
            <person name="Zollner A."/>
            <person name="Karpfinger-Hartl L."/>
        </authorList>
    </citation>
    <scope>NUCLEOTIDE SEQUENCE [LARGE SCALE GENOMIC DNA]</scope>
    <source>
        <strain>ATCC 204508 / S288c</strain>
    </source>
</reference>
<reference key="2">
    <citation type="journal article" date="2014" name="G3 (Bethesda)">
        <title>The reference genome sequence of Saccharomyces cerevisiae: Then and now.</title>
        <authorList>
            <person name="Engel S.R."/>
            <person name="Dietrich F.S."/>
            <person name="Fisk D.G."/>
            <person name="Binkley G."/>
            <person name="Balakrishnan R."/>
            <person name="Costanzo M.C."/>
            <person name="Dwight S.S."/>
            <person name="Hitz B.C."/>
            <person name="Karra K."/>
            <person name="Nash R.S."/>
            <person name="Weng S."/>
            <person name="Wong E.D."/>
            <person name="Lloyd P."/>
            <person name="Skrzypek M.S."/>
            <person name="Miyasato S.R."/>
            <person name="Simison M."/>
            <person name="Cherry J.M."/>
        </authorList>
    </citation>
    <scope>GENOME REANNOTATION</scope>
    <source>
        <strain>ATCC 204508 / S288c</strain>
    </source>
</reference>
<reference key="3">
    <citation type="journal article" date="2002" name="Cell Calcium">
        <title>Genome-wide analysis of yeast transcription upon calcium shortage.</title>
        <authorList>
            <person name="Lombardia L.J."/>
            <person name="Becerra M."/>
            <person name="Rodriguez-Belmonte E."/>
            <person name="Hauser N.C."/>
            <person name="Cerdan M.E."/>
        </authorList>
    </citation>
    <scope>INDUCTION</scope>
</reference>
<reference key="4">
    <citation type="journal article" date="2003" name="Nature">
        <title>Global analysis of protein localization in budding yeast.</title>
        <authorList>
            <person name="Huh W.-K."/>
            <person name="Falvo J.V."/>
            <person name="Gerke L.C."/>
            <person name="Carroll A.S."/>
            <person name="Howson R.W."/>
            <person name="Weissman J.S."/>
            <person name="O'Shea E.K."/>
        </authorList>
    </citation>
    <scope>SUBCELLULAR LOCATION [LARGE SCALE ANALYSIS]</scope>
</reference>
<reference key="5">
    <citation type="journal article" date="2003" name="Nature">
        <title>Global analysis of protein expression in yeast.</title>
        <authorList>
            <person name="Ghaemmaghami S."/>
            <person name="Huh W.-K."/>
            <person name="Bower K."/>
            <person name="Howson R.W."/>
            <person name="Belle A."/>
            <person name="Dephoure N."/>
            <person name="O'Shea E.K."/>
            <person name="Weissman J.S."/>
        </authorList>
    </citation>
    <scope>LEVEL OF PROTEIN EXPRESSION [LARGE SCALE ANALYSIS]</scope>
</reference>
<reference key="6">
    <citation type="journal article" date="2004" name="J. Biol. Chem.">
        <title>Systematic mutagenesis of the leucine-rich repeat (LRR) domain of CCR4 reveals specific sites for binding to CAF1 and a separate critical role for the LRR in CCR4 deadenylase activity.</title>
        <authorList>
            <person name="Clark L.B."/>
            <person name="Viswanathan P."/>
            <person name="Quigley G."/>
            <person name="Chiang Y.-C."/>
            <person name="McMahon J.S."/>
            <person name="Yao G."/>
            <person name="Chen J."/>
            <person name="Nelsbach A."/>
            <person name="Denis C.L."/>
        </authorList>
    </citation>
    <scope>INTERACTION WITH CCR4</scope>
</reference>
<reference key="7">
    <citation type="journal article" date="2006" name="J. Proteome Res.">
        <title>Toward the complete yeast mitochondrial proteome: multidimensional separation techniques for mitochondrial proteomics.</title>
        <authorList>
            <person name="Reinders J."/>
            <person name="Zahedi R.P."/>
            <person name="Pfanner N."/>
            <person name="Meisinger C."/>
            <person name="Sickmann A."/>
        </authorList>
    </citation>
    <scope>SUBCELLULAR LOCATION [LARGE SCALE ANALYSIS]</scope>
    <scope>IDENTIFICATION BY MASS SPECTROMETRY</scope>
</reference>
<reference key="8">
    <citation type="journal article" date="2008" name="Mol. Cell. Biol.">
        <title>Mitochondrial Iba57p is required for Fe/S cluster formation on aconitase and activation of radical SAM enzymes.</title>
        <authorList>
            <person name="Gelling C."/>
            <person name="Dawes I.W."/>
            <person name="Richhardt N."/>
            <person name="Lill R."/>
            <person name="Muehlenhoff U."/>
        </authorList>
    </citation>
    <scope>FUNCTION</scope>
    <scope>SUBCELLULAR LOCATION</scope>
    <scope>INTERACTION WITH ISA1 AND ISA2</scope>
</reference>
<proteinExistence type="evidence at protein level"/>
<accession>P47158</accession>
<accession>D6VWU1</accession>
<protein>
    <recommendedName>
        <fullName>Iron-sulfur cluster assembly factor IBA57, mitochondrial</fullName>
    </recommendedName>
    <alternativeName>
        <fullName evidence="9">57 kDa iron-sulfur cluster assembly factor for biotin synthase- and aconitase-like mitochondrial proteins</fullName>
    </alternativeName>
    <alternativeName>
        <fullName>CCR4-associated factor 17</fullName>
    </alternativeName>
</protein>
<comment type="function">
    <text evidence="8">Required for lysine and glutamate prototrophy and mitochondrial genome maintenance. Has a role in the maturation of mitochondrial aconitase-type and radical-SAM Fe/S proteins biotin synthase and lipoic acid synthase.</text>
</comment>
<comment type="subunit">
    <text evidence="6 8">Interacts with CCR4, ISA1 and ISA2.</text>
</comment>
<comment type="interaction">
    <interactant intactId="EBI-25654">
        <id>P47158</id>
    </interactant>
    <interactant intactId="EBI-27136">
        <id>Q07821</id>
        <label>ISA1</label>
    </interactant>
    <organismsDiffer>false</organismsDiffer>
    <experiments>2</experiments>
</comment>
<comment type="interaction">
    <interactant intactId="EBI-25654">
        <id>P47158</id>
    </interactant>
    <interactant intactId="EBI-29438">
        <id>Q12425</id>
        <label>ISA2</label>
    </interactant>
    <organismsDiffer>false</organismsDiffer>
    <experiments>2</experiments>
</comment>
<comment type="subcellular location">
    <subcellularLocation>
        <location evidence="4 7 8">Mitochondrion matrix</location>
    </subcellularLocation>
</comment>
<comment type="induction">
    <text evidence="3">Up-regulated during calcium shortage.</text>
</comment>
<comment type="miscellaneous">
    <text evidence="5">Present with 2960 molecules/cell in log phase SD medium.</text>
</comment>
<comment type="similarity">
    <text evidence="10">Belongs to the GcvT family. CAF17/IBA57 subfamily.</text>
</comment>
<name>CAF17_YEAST</name>
<evidence type="ECO:0000255" key="1"/>
<evidence type="ECO:0000256" key="2">
    <source>
        <dbReference type="SAM" id="MobiDB-lite"/>
    </source>
</evidence>
<evidence type="ECO:0000269" key="3">
    <source>
    </source>
</evidence>
<evidence type="ECO:0000269" key="4">
    <source>
    </source>
</evidence>
<evidence type="ECO:0000269" key="5">
    <source>
    </source>
</evidence>
<evidence type="ECO:0000269" key="6">
    <source>
    </source>
</evidence>
<evidence type="ECO:0000269" key="7">
    <source>
    </source>
</evidence>
<evidence type="ECO:0000269" key="8">
    <source>
    </source>
</evidence>
<evidence type="ECO:0000303" key="9">
    <source>
    </source>
</evidence>
<evidence type="ECO:0000305" key="10"/>
<evidence type="ECO:0000312" key="11">
    <source>
        <dbReference type="SGD" id="S000003883"/>
    </source>
</evidence>
<keyword id="KW-0496">Mitochondrion</keyword>
<keyword id="KW-1185">Reference proteome</keyword>
<keyword id="KW-0809">Transit peptide</keyword>
<dbReference type="EMBL" id="Z49622">
    <property type="protein sequence ID" value="CAA89653.1"/>
    <property type="molecule type" value="Genomic_DNA"/>
</dbReference>
<dbReference type="EMBL" id="BK006943">
    <property type="protein sequence ID" value="DAA08907.1"/>
    <property type="molecule type" value="Genomic_DNA"/>
</dbReference>
<dbReference type="PIR" id="S57145">
    <property type="entry name" value="S57145"/>
</dbReference>
<dbReference type="RefSeq" id="NP_012656.1">
    <property type="nucleotide sequence ID" value="NM_001181780.1"/>
</dbReference>
<dbReference type="SMR" id="P47158"/>
<dbReference type="BioGRID" id="33878">
    <property type="interactions" value="22"/>
</dbReference>
<dbReference type="ComplexPortal" id="CPX-2723">
    <property type="entry name" value="ISA1-ISA2-IBA57 mitochondrial iron-sulfur protein assembly complex"/>
</dbReference>
<dbReference type="DIP" id="DIP-1404N"/>
<dbReference type="FunCoup" id="P47158">
    <property type="interactions" value="387"/>
</dbReference>
<dbReference type="IntAct" id="P47158">
    <property type="interactions" value="18"/>
</dbReference>
<dbReference type="MINT" id="P47158"/>
<dbReference type="STRING" id="4932.YJR122W"/>
<dbReference type="GlyGen" id="P47158">
    <property type="glycosylation" value="1 site"/>
</dbReference>
<dbReference type="PaxDb" id="4932-YJR122W"/>
<dbReference type="PeptideAtlas" id="P47158"/>
<dbReference type="EnsemblFungi" id="YJR122W_mRNA">
    <property type="protein sequence ID" value="YJR122W"/>
    <property type="gene ID" value="YJR122W"/>
</dbReference>
<dbReference type="GeneID" id="853586"/>
<dbReference type="KEGG" id="sce:YJR122W"/>
<dbReference type="AGR" id="SGD:S000003883"/>
<dbReference type="SGD" id="S000003883">
    <property type="gene designation" value="IBA57"/>
</dbReference>
<dbReference type="VEuPathDB" id="FungiDB:YJR122W"/>
<dbReference type="eggNOG" id="KOG2929">
    <property type="taxonomic scope" value="Eukaryota"/>
</dbReference>
<dbReference type="GeneTree" id="ENSGT00390000006465"/>
<dbReference type="HOGENOM" id="CLU_007884_7_3_1"/>
<dbReference type="InParanoid" id="P47158"/>
<dbReference type="OMA" id="NMLVAND"/>
<dbReference type="OrthoDB" id="191995at2759"/>
<dbReference type="BioCyc" id="YEAST:G3O-31743-MONOMER"/>
<dbReference type="BioGRID-ORCS" id="853586">
    <property type="hits" value="2 hits in 10 CRISPR screens"/>
</dbReference>
<dbReference type="PRO" id="PR:P47158"/>
<dbReference type="Proteomes" id="UP000002311">
    <property type="component" value="Chromosome X"/>
</dbReference>
<dbReference type="RNAct" id="P47158">
    <property type="molecule type" value="protein"/>
</dbReference>
<dbReference type="GO" id="GO:0005759">
    <property type="term" value="C:mitochondrial matrix"/>
    <property type="evidence" value="ECO:0000314"/>
    <property type="project" value="SGD"/>
</dbReference>
<dbReference type="GO" id="GO:0005739">
    <property type="term" value="C:mitochondrion"/>
    <property type="evidence" value="ECO:0007005"/>
    <property type="project" value="SGD"/>
</dbReference>
<dbReference type="GO" id="GO:0016740">
    <property type="term" value="F:transferase activity"/>
    <property type="evidence" value="ECO:0007669"/>
    <property type="project" value="UniProtKB-KW"/>
</dbReference>
<dbReference type="GO" id="GO:0016226">
    <property type="term" value="P:iron-sulfur cluster assembly"/>
    <property type="evidence" value="ECO:0000318"/>
    <property type="project" value="GO_Central"/>
</dbReference>
<dbReference type="GO" id="GO:0051604">
    <property type="term" value="P:protein maturation"/>
    <property type="evidence" value="ECO:0000315"/>
    <property type="project" value="SGD"/>
</dbReference>
<dbReference type="FunFam" id="2.40.30.160:FF:000003">
    <property type="entry name" value="Ccr4 associated factor"/>
    <property type="match status" value="1"/>
</dbReference>
<dbReference type="Gene3D" id="2.40.30.160">
    <property type="match status" value="1"/>
</dbReference>
<dbReference type="Gene3D" id="3.30.1360.120">
    <property type="entry name" value="Probable tRNA modification gtpase trme, domain 1"/>
    <property type="match status" value="1"/>
</dbReference>
<dbReference type="InterPro" id="IPR027266">
    <property type="entry name" value="TrmE/GcvT_dom1"/>
</dbReference>
<dbReference type="InterPro" id="IPR045179">
    <property type="entry name" value="YgfZ/GcvT"/>
</dbReference>
<dbReference type="InterPro" id="IPR017703">
    <property type="entry name" value="YgfZ/GcvT_CS"/>
</dbReference>
<dbReference type="NCBIfam" id="TIGR03317">
    <property type="entry name" value="ygfZ_signature"/>
    <property type="match status" value="1"/>
</dbReference>
<dbReference type="PANTHER" id="PTHR22602">
    <property type="entry name" value="TRANSFERASE CAF17, MITOCHONDRIAL-RELATED"/>
    <property type="match status" value="1"/>
</dbReference>
<dbReference type="PANTHER" id="PTHR22602:SF0">
    <property type="entry name" value="TRANSFERASE CAF17, MITOCHONDRIAL-RELATED"/>
    <property type="match status" value="1"/>
</dbReference>
<dbReference type="Pfam" id="PF25455">
    <property type="entry name" value="Beta-barrel_CAF17_C"/>
    <property type="match status" value="1"/>
</dbReference>
<dbReference type="SUPFAM" id="SSF103025">
    <property type="entry name" value="Folate-binding domain"/>
    <property type="match status" value="1"/>
</dbReference>
<sequence length="497" mass="57055">MFISRRCRIKGFTLKNLLWFRSSSTRFVSTESPDASAITKPDGIFNYSLLENRTYIRIRGPDTVKFLNGLVTSKLLPHFIKKNLTTVEENEVPTEEGTTKVDPIIPVPEFDARLGNWGLYNEKGIQGPYISRFGLYSAFLNGKGKLITDTIIYPTPVTVSEQISNYPEYLLELHGNVVDKILHVLQTHKLANKIKFEKIDHSSLKTWDVEVQFPNLPKDIENPWFDNLLDPMALPKNSIDANNFAVNVLNSLFNSDPRILGIYVERRTESMSRHYSTFPQSFRVVTSEQVDDLSKLFNFNVFDFPFQVNKKASVQVREIRFQKGLIDSTEDYISETLLPLELNFDFFPNTISTNKGCYVGQELTARTYATGILRKRLVPVKLDNYQLLDTDPERKYAEFHIDNVVEKSLAENEPTLNPFTNKPPERTKRKQRPAGLLISNEGLYGVALLRTEHFSAAFSSDEPVEFYITTTKGENIKITPQKPFWFSDWKNNNGPHK</sequence>
<feature type="transit peptide" description="Mitochondrion" evidence="1">
    <location>
        <begin position="1"/>
        <end position="27"/>
    </location>
</feature>
<feature type="chain" id="PRO_0000203117" description="Iron-sulfur cluster assembly factor IBA57, mitochondrial">
    <location>
        <begin position="28"/>
        <end position="497"/>
    </location>
</feature>
<feature type="region of interest" description="Disordered" evidence="2">
    <location>
        <begin position="414"/>
        <end position="433"/>
    </location>
</feature>
<gene>
    <name evidence="11" type="primary">IBA57</name>
    <name type="synonym">CAF17</name>
    <name type="ordered locus">YJR122W</name>
    <name type="ORF">J2043</name>
</gene>
<organism>
    <name type="scientific">Saccharomyces cerevisiae (strain ATCC 204508 / S288c)</name>
    <name type="common">Baker's yeast</name>
    <dbReference type="NCBI Taxonomy" id="559292"/>
    <lineage>
        <taxon>Eukaryota</taxon>
        <taxon>Fungi</taxon>
        <taxon>Dikarya</taxon>
        <taxon>Ascomycota</taxon>
        <taxon>Saccharomycotina</taxon>
        <taxon>Saccharomycetes</taxon>
        <taxon>Saccharomycetales</taxon>
        <taxon>Saccharomycetaceae</taxon>
        <taxon>Saccharomyces</taxon>
    </lineage>
</organism>